<accession>Q6MAK6</accession>
<gene>
    <name evidence="1" type="primary">atpG</name>
    <name type="ordered locus">pc1669</name>
</gene>
<sequence length="285" mass="32836">MASLREIRKRLQSIQNIQQLTKAMEMVAASRLHQVQIKVKQAKPYVVKLSEILDRLSQITQDIKHPLLEQREVKKVGVVIVAADMGLSGPYNKDIFSAANKFLKTYAQEQVELILVGKKATDYYKKRPWNIRFEFGEWGEKLTSHQIKTFANQLMSWFLIGELDEIWLVYTHYVTMMTRKVMVEKFLNIQQISPKSEKSPVDYIFEPNPKQIYGAILFNYCMTKFQSILNESYASELAARIFAMKAATSNADDMIEKLTLVRNKVRQAGITKEMLEITSGAEGLK</sequence>
<organism>
    <name type="scientific">Protochlamydia amoebophila (strain UWE25)</name>
    <dbReference type="NCBI Taxonomy" id="264201"/>
    <lineage>
        <taxon>Bacteria</taxon>
        <taxon>Pseudomonadati</taxon>
        <taxon>Chlamydiota</taxon>
        <taxon>Chlamydiia</taxon>
        <taxon>Parachlamydiales</taxon>
        <taxon>Parachlamydiaceae</taxon>
        <taxon>Candidatus Protochlamydia</taxon>
    </lineage>
</organism>
<reference key="1">
    <citation type="journal article" date="2004" name="Science">
        <title>Illuminating the evolutionary history of chlamydiae.</title>
        <authorList>
            <person name="Horn M."/>
            <person name="Collingro A."/>
            <person name="Schmitz-Esser S."/>
            <person name="Beier C.L."/>
            <person name="Purkhold U."/>
            <person name="Fartmann B."/>
            <person name="Brandt P."/>
            <person name="Nyakatura G.J."/>
            <person name="Droege M."/>
            <person name="Frishman D."/>
            <person name="Rattei T."/>
            <person name="Mewes H.-W."/>
            <person name="Wagner M."/>
        </authorList>
    </citation>
    <scope>NUCLEOTIDE SEQUENCE [LARGE SCALE GENOMIC DNA]</scope>
    <source>
        <strain>UWE25</strain>
    </source>
</reference>
<keyword id="KW-0066">ATP synthesis</keyword>
<keyword id="KW-0997">Cell inner membrane</keyword>
<keyword id="KW-1003">Cell membrane</keyword>
<keyword id="KW-0139">CF(1)</keyword>
<keyword id="KW-0375">Hydrogen ion transport</keyword>
<keyword id="KW-0406">Ion transport</keyword>
<keyword id="KW-0472">Membrane</keyword>
<keyword id="KW-1185">Reference proteome</keyword>
<keyword id="KW-0813">Transport</keyword>
<feature type="chain" id="PRO_0000073334" description="ATP synthase gamma chain">
    <location>
        <begin position="1"/>
        <end position="285"/>
    </location>
</feature>
<dbReference type="EMBL" id="BX908798">
    <property type="protein sequence ID" value="CAF24393.1"/>
    <property type="molecule type" value="Genomic_DNA"/>
</dbReference>
<dbReference type="RefSeq" id="WP_011176215.1">
    <property type="nucleotide sequence ID" value="NC_005861.2"/>
</dbReference>
<dbReference type="SMR" id="Q6MAK6"/>
<dbReference type="STRING" id="264201.pc1669"/>
<dbReference type="KEGG" id="pcu:PC_RS07980"/>
<dbReference type="eggNOG" id="COG0224">
    <property type="taxonomic scope" value="Bacteria"/>
</dbReference>
<dbReference type="HOGENOM" id="CLU_050669_0_1_0"/>
<dbReference type="OrthoDB" id="9812769at2"/>
<dbReference type="Proteomes" id="UP000000529">
    <property type="component" value="Chromosome"/>
</dbReference>
<dbReference type="GO" id="GO:0005886">
    <property type="term" value="C:plasma membrane"/>
    <property type="evidence" value="ECO:0007669"/>
    <property type="project" value="UniProtKB-SubCell"/>
</dbReference>
<dbReference type="GO" id="GO:0045259">
    <property type="term" value="C:proton-transporting ATP synthase complex"/>
    <property type="evidence" value="ECO:0007669"/>
    <property type="project" value="UniProtKB-KW"/>
</dbReference>
<dbReference type="GO" id="GO:0005524">
    <property type="term" value="F:ATP binding"/>
    <property type="evidence" value="ECO:0007669"/>
    <property type="project" value="UniProtKB-UniRule"/>
</dbReference>
<dbReference type="GO" id="GO:0046933">
    <property type="term" value="F:proton-transporting ATP synthase activity, rotational mechanism"/>
    <property type="evidence" value="ECO:0007669"/>
    <property type="project" value="UniProtKB-UniRule"/>
</dbReference>
<dbReference type="GO" id="GO:0042777">
    <property type="term" value="P:proton motive force-driven plasma membrane ATP synthesis"/>
    <property type="evidence" value="ECO:0007669"/>
    <property type="project" value="UniProtKB-UniRule"/>
</dbReference>
<dbReference type="CDD" id="cd12151">
    <property type="entry name" value="F1-ATPase_gamma"/>
    <property type="match status" value="1"/>
</dbReference>
<dbReference type="Gene3D" id="3.40.1380.10">
    <property type="match status" value="1"/>
</dbReference>
<dbReference type="Gene3D" id="1.10.287.80">
    <property type="entry name" value="ATP synthase, gamma subunit, helix hairpin domain"/>
    <property type="match status" value="1"/>
</dbReference>
<dbReference type="HAMAP" id="MF_00815">
    <property type="entry name" value="ATP_synth_gamma_bact"/>
    <property type="match status" value="1"/>
</dbReference>
<dbReference type="InterPro" id="IPR035968">
    <property type="entry name" value="ATP_synth_F1_ATPase_gsu"/>
</dbReference>
<dbReference type="InterPro" id="IPR000131">
    <property type="entry name" value="ATP_synth_F1_gsu"/>
</dbReference>
<dbReference type="NCBIfam" id="TIGR01146">
    <property type="entry name" value="ATPsyn_F1gamma"/>
    <property type="match status" value="1"/>
</dbReference>
<dbReference type="PANTHER" id="PTHR11693">
    <property type="entry name" value="ATP SYNTHASE GAMMA CHAIN"/>
    <property type="match status" value="1"/>
</dbReference>
<dbReference type="PANTHER" id="PTHR11693:SF22">
    <property type="entry name" value="ATP SYNTHASE SUBUNIT GAMMA, MITOCHONDRIAL"/>
    <property type="match status" value="1"/>
</dbReference>
<dbReference type="Pfam" id="PF00231">
    <property type="entry name" value="ATP-synt"/>
    <property type="match status" value="1"/>
</dbReference>
<dbReference type="PRINTS" id="PR00126">
    <property type="entry name" value="ATPASEGAMMA"/>
</dbReference>
<dbReference type="SUPFAM" id="SSF52943">
    <property type="entry name" value="ATP synthase (F1-ATPase), gamma subunit"/>
    <property type="match status" value="1"/>
</dbReference>
<protein>
    <recommendedName>
        <fullName evidence="1">ATP synthase gamma chain</fullName>
    </recommendedName>
    <alternativeName>
        <fullName evidence="1">ATP synthase F1 sector gamma subunit</fullName>
    </alternativeName>
    <alternativeName>
        <fullName evidence="1">F-ATPase gamma subunit</fullName>
    </alternativeName>
</protein>
<comment type="function">
    <text evidence="1">Produces ATP from ADP in the presence of a proton gradient across the membrane. The gamma chain is believed to be important in regulating ATPase activity and the flow of protons through the CF(0) complex.</text>
</comment>
<comment type="subunit">
    <text evidence="1">F-type ATPases have 2 components, CF(1) - the catalytic core - and CF(0) - the membrane proton channel. CF(1) has five subunits: alpha(3), beta(3), gamma(1), delta(1), epsilon(1). CF(0) has three main subunits: a, b and c.</text>
</comment>
<comment type="subcellular location">
    <subcellularLocation>
        <location evidence="1">Cell inner membrane</location>
        <topology evidence="1">Peripheral membrane protein</topology>
    </subcellularLocation>
</comment>
<comment type="similarity">
    <text evidence="1">Belongs to the ATPase gamma chain family.</text>
</comment>
<proteinExistence type="inferred from homology"/>
<name>ATPG_PARUW</name>
<evidence type="ECO:0000255" key="1">
    <source>
        <dbReference type="HAMAP-Rule" id="MF_00815"/>
    </source>
</evidence>